<comment type="function">
    <text evidence="1">Zeaxanthin epoxidase that plays an important role in the xanthophyll cycle and abscisic acid (ABA) biosynthesis. Converts zeaxanthin into antheraxanthin and subsequently violaxanthin.</text>
</comment>
<comment type="catalytic activity">
    <reaction>
        <text>all-trans-zeaxanthin + 4 reduced [2Fe-2S]-[ferredoxin] + 2 O2 + 4 H(+) = all-trans-violaxanthin + 4 oxidized [2Fe-2S]-[ferredoxin] + 2 H2O</text>
        <dbReference type="Rhea" id="RHEA:32443"/>
        <dbReference type="Rhea" id="RHEA-COMP:10000"/>
        <dbReference type="Rhea" id="RHEA-COMP:10001"/>
        <dbReference type="ChEBI" id="CHEBI:15377"/>
        <dbReference type="ChEBI" id="CHEBI:15378"/>
        <dbReference type="ChEBI" id="CHEBI:15379"/>
        <dbReference type="ChEBI" id="CHEBI:27547"/>
        <dbReference type="ChEBI" id="CHEBI:33737"/>
        <dbReference type="ChEBI" id="CHEBI:33738"/>
        <dbReference type="ChEBI" id="CHEBI:35288"/>
        <dbReference type="EC" id="1.14.15.21"/>
    </reaction>
</comment>
<comment type="cofactor">
    <cofactor evidence="4">
        <name>FAD</name>
        <dbReference type="ChEBI" id="CHEBI:57692"/>
    </cofactor>
</comment>
<comment type="pathway">
    <text>Plant hormone biosynthesis; abscisate biosynthesis.</text>
</comment>
<comment type="subcellular location">
    <subcellularLocation>
        <location evidence="1">Plastid</location>
        <location evidence="1">Chloroplast</location>
    </subcellularLocation>
</comment>
<comment type="tissue specificity">
    <text evidence="3">Expressed in flower buds, lips and leaves. Detected in roots.</text>
</comment>
<comment type="developmental stage">
    <text evidence="3">Expressed during floral development.</text>
</comment>
<comment type="miscellaneous">
    <text>High expression of beta-hydroxylase (BHY) and zeaxanthin epoxidase (ZEP) results in the accumulation of violaxanthin, 9-cis-violaxanthin and neoxanthin in the yellow cultivar Gower Ramsey, while the down-regulation of BHY and ZEP results in the accumulation of beta-carotene and orange coloration in floral tissues of the cultivar Sunkist.</text>
</comment>
<reference key="1">
    <citation type="journal article" date="2010" name="Planta">
        <title>Differential expression of carotenoid-related genes determines diversified carotenoid coloration in floral tissues of Oncidium cultivars.</title>
        <authorList>
            <person name="Chiou C.Y."/>
            <person name="Pan H.A."/>
            <person name="Chuang Y.N."/>
            <person name="Yeh K.W."/>
        </authorList>
    </citation>
    <scope>NUCLEOTIDE SEQUENCE [MRNA]</scope>
    <scope>DEVELOPMENTAL STAGE</scope>
    <scope>TISSUE SPECIFICITY</scope>
</reference>
<dbReference type="EC" id="1.14.15.21"/>
<dbReference type="EMBL" id="FJ859993">
    <property type="protein sequence ID" value="ACP27627.1"/>
    <property type="molecule type" value="mRNA"/>
</dbReference>
<dbReference type="SMR" id="C3VEQ2"/>
<dbReference type="UniPathway" id="UPA00090"/>
<dbReference type="GO" id="GO:0009507">
    <property type="term" value="C:chloroplast"/>
    <property type="evidence" value="ECO:0007669"/>
    <property type="project" value="UniProtKB-SubCell"/>
</dbReference>
<dbReference type="GO" id="GO:0016020">
    <property type="term" value="C:membrane"/>
    <property type="evidence" value="ECO:0007669"/>
    <property type="project" value="InterPro"/>
</dbReference>
<dbReference type="GO" id="GO:0071949">
    <property type="term" value="F:FAD binding"/>
    <property type="evidence" value="ECO:0007669"/>
    <property type="project" value="InterPro"/>
</dbReference>
<dbReference type="GO" id="GO:0052662">
    <property type="term" value="F:zeaxanthin epoxidase activity"/>
    <property type="evidence" value="ECO:0007669"/>
    <property type="project" value="UniProtKB-EC"/>
</dbReference>
<dbReference type="GO" id="GO:0009688">
    <property type="term" value="P:abscisic acid biosynthetic process"/>
    <property type="evidence" value="ECO:0007669"/>
    <property type="project" value="UniProtKB-UniPathway"/>
</dbReference>
<dbReference type="CDD" id="cd22702">
    <property type="entry name" value="FHA_ZEP-like"/>
    <property type="match status" value="1"/>
</dbReference>
<dbReference type="Gene3D" id="2.60.200.20">
    <property type="match status" value="1"/>
</dbReference>
<dbReference type="Gene3D" id="3.50.50.60">
    <property type="entry name" value="FAD/NAD(P)-binding domain"/>
    <property type="match status" value="1"/>
</dbReference>
<dbReference type="InterPro" id="IPR002938">
    <property type="entry name" value="FAD-bd"/>
</dbReference>
<dbReference type="InterPro" id="IPR036188">
    <property type="entry name" value="FAD/NAD-bd_sf"/>
</dbReference>
<dbReference type="InterPro" id="IPR000253">
    <property type="entry name" value="FHA_dom"/>
</dbReference>
<dbReference type="InterPro" id="IPR008984">
    <property type="entry name" value="SMAD_FHA_dom_sf"/>
</dbReference>
<dbReference type="InterPro" id="IPR017079">
    <property type="entry name" value="Zeaxanthin_epoxidase"/>
</dbReference>
<dbReference type="PANTHER" id="PTHR46496">
    <property type="match status" value="1"/>
</dbReference>
<dbReference type="PANTHER" id="PTHR46496:SF1">
    <property type="entry name" value="ZEAXANTHIN EPOXIDASE, CHLOROPLASTIC"/>
    <property type="match status" value="1"/>
</dbReference>
<dbReference type="Pfam" id="PF01494">
    <property type="entry name" value="FAD_binding_3"/>
    <property type="match status" value="1"/>
</dbReference>
<dbReference type="Pfam" id="PF00498">
    <property type="entry name" value="FHA"/>
    <property type="match status" value="1"/>
</dbReference>
<dbReference type="PIRSF" id="PIRSF036989">
    <property type="entry name" value="Zeaxanthin_epoxidase"/>
    <property type="match status" value="1"/>
</dbReference>
<dbReference type="PRINTS" id="PR00420">
    <property type="entry name" value="RNGMNOXGNASE"/>
</dbReference>
<dbReference type="SUPFAM" id="SSF51905">
    <property type="entry name" value="FAD/NAD(P)-binding domain"/>
    <property type="match status" value="1"/>
</dbReference>
<dbReference type="SUPFAM" id="SSF49879">
    <property type="entry name" value="SMAD/FHA domain"/>
    <property type="match status" value="1"/>
</dbReference>
<proteinExistence type="evidence at transcript level"/>
<evidence type="ECO:0000250" key="1"/>
<evidence type="ECO:0000255" key="2"/>
<evidence type="ECO:0000269" key="3">
    <source>
    </source>
</evidence>
<evidence type="ECO:0000305" key="4"/>
<keyword id="KW-0937">Abscisic acid biosynthesis</keyword>
<keyword id="KW-0150">Chloroplast</keyword>
<keyword id="KW-0274">FAD</keyword>
<keyword id="KW-0285">Flavoprotein</keyword>
<keyword id="KW-0560">Oxidoreductase</keyword>
<keyword id="KW-0934">Plastid</keyword>
<keyword id="KW-0809">Transit peptide</keyword>
<sequence length="661" mass="73797">MLLFRATLLPSPPFFHKTYFSHLSPVIFSDDPLPVSLQRNRVSGCRKQKWRQIRTLALQSDTLSEVRSAPPELNVERNKFRILIAGGGIGGLVLALAAKKKGFDALVFEKDMSAIRGEGQYRGPIQIQSNALAALEAIDSQVAEEVMGTGCITGDRINGLVDGVSGTWYIKFDTFTPAAERGLPVTRVISRMSLQQILARAVGDDAILSDSKIVDFVDYGNKVAVILENGQQYEGDLLVGADGIWSKVREILFGYSEPSYSGYTCYTGIADFVPPDIDTVGYRVFLGHKQYFVSSDVGAGKMQWYAFHNEPPSGSDVPNGKKEILLKIFNGWCDNVIDLINATEEELILRRDIYDRIPIFTWGKGRVTLLGDSVHAMQPNMGQGGCMAIEDSYQLAHELEKARKESIQSRKPMDVKSALKRYEKERRLRVAVIYGMARMAAIMASTYRPYLGVGLGPLSFLTKYKIPHPGRTSGRLVIKYAMPLMLSWVLGGNSSKLEGRSLTCRLSDKASDQLRKWFEDDDALERALGGEWYLFPLNNGDIQPIRLVRDDKRFHIIGSISHDDSEGISIHLPFPQVHKTHARIACKDNIFYLTDLQSQYGTWITDNEGRRYQAPPNVPVRFRSSYSIEFGSDKKVVFKVKVLSTSHKSAVYGGQNLSPVV</sequence>
<protein>
    <recommendedName>
        <fullName>Zeaxanthin epoxidase, chloroplastic</fullName>
        <shortName>OgZEP</shortName>
        <ecNumber>1.14.15.21</ecNumber>
    </recommendedName>
</protein>
<gene>
    <name type="primary">ZEP</name>
</gene>
<name>ZEP_ONCHC</name>
<feature type="transit peptide" description="Chloroplast" evidence="2">
    <location>
        <begin position="1"/>
        <end position="59"/>
    </location>
</feature>
<feature type="chain" id="PRO_0000426713" description="Zeaxanthin epoxidase, chloroplastic">
    <location>
        <begin position="60"/>
        <end position="661"/>
    </location>
</feature>
<feature type="domain" description="FHA" evidence="1">
    <location>
        <begin position="555"/>
        <end position="609"/>
    </location>
</feature>
<feature type="binding site" evidence="2">
    <location>
        <begin position="81"/>
        <end position="109"/>
    </location>
    <ligand>
        <name>FAD</name>
        <dbReference type="ChEBI" id="CHEBI:57692"/>
    </ligand>
</feature>
<feature type="binding site" evidence="2">
    <location>
        <begin position="359"/>
        <end position="372"/>
    </location>
    <ligand>
        <name>FAD</name>
        <dbReference type="ChEBI" id="CHEBI:57692"/>
    </ligand>
</feature>
<accession>C3VEQ2</accession>
<organism>
    <name type="scientific">Oncidium hybrid cultivar</name>
    <name type="common">Orchid</name>
    <dbReference type="NCBI Taxonomy" id="141207"/>
    <lineage>
        <taxon>Eukaryota</taxon>
        <taxon>Viridiplantae</taxon>
        <taxon>Streptophyta</taxon>
        <taxon>Embryophyta</taxon>
        <taxon>Tracheophyta</taxon>
        <taxon>Spermatophyta</taxon>
        <taxon>Magnoliopsida</taxon>
        <taxon>Liliopsida</taxon>
        <taxon>Asparagales</taxon>
        <taxon>Orchidaceae</taxon>
        <taxon>Epidendroideae</taxon>
        <taxon>Cymbidieae</taxon>
        <taxon>Oncidiinae</taxon>
        <taxon>Oncidium</taxon>
    </lineage>
</organism>